<organism>
    <name type="scientific">Francisella tularensis subsp. tularensis (strain FSC 198)</name>
    <dbReference type="NCBI Taxonomy" id="393115"/>
    <lineage>
        <taxon>Bacteria</taxon>
        <taxon>Pseudomonadati</taxon>
        <taxon>Pseudomonadota</taxon>
        <taxon>Gammaproteobacteria</taxon>
        <taxon>Thiotrichales</taxon>
        <taxon>Francisellaceae</taxon>
        <taxon>Francisella</taxon>
    </lineage>
</organism>
<gene>
    <name evidence="1" type="primary">fusA</name>
    <name type="ordered locus">FTF0323</name>
</gene>
<protein>
    <recommendedName>
        <fullName evidence="1">Elongation factor G</fullName>
        <shortName evidence="1">EF-G</shortName>
    </recommendedName>
</protein>
<keyword id="KW-0963">Cytoplasm</keyword>
<keyword id="KW-0251">Elongation factor</keyword>
<keyword id="KW-0342">GTP-binding</keyword>
<keyword id="KW-0547">Nucleotide-binding</keyword>
<keyword id="KW-0648">Protein biosynthesis</keyword>
<sequence length="704" mass="77697">MPRNTALEKYRNIGICAHVDAGKTTTTERILFYTGLSHKIGEVHDGAATMDWMEQEQERGITITSAATTTFWSGMDQQFEKHRINIIDTPGHVDFTIEVERSLRVLDGAVVVFCGSSGVEPQSETVWRQANKYGVPRIVFVNKMDRSGADFERVCAQIKTRLKANVVPVQLNIGAEEDFKGVIDLIRMKAIMWNEEDMGLTYELVDIPADLQDRAEELRMEMIEAAAEASEELMEKYLEGGELSEDEIHQGLRARVLNNEIVLAFCGSAFKNKGVQAVLDGVVRYLPAPNQVPAIKCETEDGEPASRPSSDDAPFAALAFKLATDPFVGNLTFIRVYSGVLKSGDAVYNPVKGKKERVGRIVQMHANKRDEIKEVRAGDIAACIGLKDVTTGDTLCDQEDVVILEKMDFPEPVISVAVEPKSKADQEKMSIALGKLAAEDPSFRVKTDEESGQTIISGMGELHLDIVVDRMRREFKVEANVGNPQVAYRETIRSKVEQEAKFVRQSGGRGQYGHVFVRFEPLDEVDENGEAKVFKFVDEVVGGVVPKEYIGSVAKGIEEQLNNGVLAGYPMIGVKATLYDGSYHDVDSSEMAFKIAGSMALKEGAKKANACILEPIMKVEVVTPEDYLGDVMGDLNRRRGIIEGMDENPSGRVINALVPLAEMFGYATNVRSISQGRASFSMEFKKYAEVPNNIADEIIKSHNS</sequence>
<feature type="chain" id="PRO_0000263452" description="Elongation factor G">
    <location>
        <begin position="1"/>
        <end position="704"/>
    </location>
</feature>
<feature type="domain" description="tr-type G">
    <location>
        <begin position="8"/>
        <end position="290"/>
    </location>
</feature>
<feature type="binding site" evidence="1">
    <location>
        <begin position="17"/>
        <end position="24"/>
    </location>
    <ligand>
        <name>GTP</name>
        <dbReference type="ChEBI" id="CHEBI:37565"/>
    </ligand>
</feature>
<feature type="binding site" evidence="1">
    <location>
        <begin position="88"/>
        <end position="92"/>
    </location>
    <ligand>
        <name>GTP</name>
        <dbReference type="ChEBI" id="CHEBI:37565"/>
    </ligand>
</feature>
<feature type="binding site" evidence="1">
    <location>
        <begin position="142"/>
        <end position="145"/>
    </location>
    <ligand>
        <name>GTP</name>
        <dbReference type="ChEBI" id="CHEBI:37565"/>
    </ligand>
</feature>
<reference key="1">
    <citation type="journal article" date="2007" name="PLoS ONE">
        <title>Genome sequencing shows that European isolates of Francisella tularensis subspecies tularensis are almost identical to US laboratory strain Schu S4.</title>
        <authorList>
            <person name="Chaudhuri R.R."/>
            <person name="Ren C.-P."/>
            <person name="Desmond L."/>
            <person name="Vincent G.A."/>
            <person name="Silman N.J."/>
            <person name="Brehm J.K."/>
            <person name="Elmore M.J."/>
            <person name="Hudson M.J."/>
            <person name="Forsman M."/>
            <person name="Isherwood K.E."/>
            <person name="Gurycova D."/>
            <person name="Minton N.P."/>
            <person name="Titball R.W."/>
            <person name="Pallen M.J."/>
            <person name="Vipond R."/>
        </authorList>
    </citation>
    <scope>NUCLEOTIDE SEQUENCE [LARGE SCALE GENOMIC DNA]</scope>
    <source>
        <strain>FSC 198</strain>
    </source>
</reference>
<accession>Q14JC2</accession>
<dbReference type="EMBL" id="AM286280">
    <property type="protein sequence ID" value="CAL08339.1"/>
    <property type="molecule type" value="Genomic_DNA"/>
</dbReference>
<dbReference type="RefSeq" id="WP_003028885.1">
    <property type="nucleotide sequence ID" value="NC_008245.1"/>
</dbReference>
<dbReference type="SMR" id="Q14JC2"/>
<dbReference type="KEGG" id="ftf:FTF0323"/>
<dbReference type="HOGENOM" id="CLU_002794_4_1_6"/>
<dbReference type="GO" id="GO:0005737">
    <property type="term" value="C:cytoplasm"/>
    <property type="evidence" value="ECO:0007669"/>
    <property type="project" value="UniProtKB-SubCell"/>
</dbReference>
<dbReference type="GO" id="GO:0005525">
    <property type="term" value="F:GTP binding"/>
    <property type="evidence" value="ECO:0007669"/>
    <property type="project" value="UniProtKB-UniRule"/>
</dbReference>
<dbReference type="GO" id="GO:0003924">
    <property type="term" value="F:GTPase activity"/>
    <property type="evidence" value="ECO:0007669"/>
    <property type="project" value="InterPro"/>
</dbReference>
<dbReference type="GO" id="GO:0097216">
    <property type="term" value="F:guanosine tetraphosphate binding"/>
    <property type="evidence" value="ECO:0007669"/>
    <property type="project" value="UniProtKB-ARBA"/>
</dbReference>
<dbReference type="GO" id="GO:0003746">
    <property type="term" value="F:translation elongation factor activity"/>
    <property type="evidence" value="ECO:0007669"/>
    <property type="project" value="UniProtKB-UniRule"/>
</dbReference>
<dbReference type="GO" id="GO:0032790">
    <property type="term" value="P:ribosome disassembly"/>
    <property type="evidence" value="ECO:0007669"/>
    <property type="project" value="TreeGrafter"/>
</dbReference>
<dbReference type="CDD" id="cd01886">
    <property type="entry name" value="EF-G"/>
    <property type="match status" value="1"/>
</dbReference>
<dbReference type="CDD" id="cd16262">
    <property type="entry name" value="EFG_III"/>
    <property type="match status" value="1"/>
</dbReference>
<dbReference type="CDD" id="cd01434">
    <property type="entry name" value="EFG_mtEFG1_IV"/>
    <property type="match status" value="1"/>
</dbReference>
<dbReference type="CDD" id="cd03713">
    <property type="entry name" value="EFG_mtEFG_C"/>
    <property type="match status" value="1"/>
</dbReference>
<dbReference type="CDD" id="cd04088">
    <property type="entry name" value="EFG_mtEFG_II"/>
    <property type="match status" value="1"/>
</dbReference>
<dbReference type="FunFam" id="2.40.30.10:FF:000006">
    <property type="entry name" value="Elongation factor G"/>
    <property type="match status" value="1"/>
</dbReference>
<dbReference type="FunFam" id="3.30.230.10:FF:000003">
    <property type="entry name" value="Elongation factor G"/>
    <property type="match status" value="1"/>
</dbReference>
<dbReference type="FunFam" id="3.30.70.240:FF:000001">
    <property type="entry name" value="Elongation factor G"/>
    <property type="match status" value="1"/>
</dbReference>
<dbReference type="FunFam" id="3.30.70.870:FF:000001">
    <property type="entry name" value="Elongation factor G"/>
    <property type="match status" value="1"/>
</dbReference>
<dbReference type="FunFam" id="3.40.50.300:FF:000029">
    <property type="entry name" value="Elongation factor G"/>
    <property type="match status" value="1"/>
</dbReference>
<dbReference type="Gene3D" id="3.30.230.10">
    <property type="match status" value="1"/>
</dbReference>
<dbReference type="Gene3D" id="3.30.70.240">
    <property type="match status" value="1"/>
</dbReference>
<dbReference type="Gene3D" id="3.30.70.870">
    <property type="entry name" value="Elongation Factor G (Translational Gtpase), domain 3"/>
    <property type="match status" value="1"/>
</dbReference>
<dbReference type="Gene3D" id="3.40.50.300">
    <property type="entry name" value="P-loop containing nucleotide triphosphate hydrolases"/>
    <property type="match status" value="1"/>
</dbReference>
<dbReference type="Gene3D" id="2.40.30.10">
    <property type="entry name" value="Translation factors"/>
    <property type="match status" value="1"/>
</dbReference>
<dbReference type="HAMAP" id="MF_00054_B">
    <property type="entry name" value="EF_G_EF_2_B"/>
    <property type="match status" value="1"/>
</dbReference>
<dbReference type="InterPro" id="IPR041095">
    <property type="entry name" value="EFG_II"/>
</dbReference>
<dbReference type="InterPro" id="IPR009022">
    <property type="entry name" value="EFG_III"/>
</dbReference>
<dbReference type="InterPro" id="IPR035647">
    <property type="entry name" value="EFG_III/V"/>
</dbReference>
<dbReference type="InterPro" id="IPR047872">
    <property type="entry name" value="EFG_IV"/>
</dbReference>
<dbReference type="InterPro" id="IPR035649">
    <property type="entry name" value="EFG_V"/>
</dbReference>
<dbReference type="InterPro" id="IPR000640">
    <property type="entry name" value="EFG_V-like"/>
</dbReference>
<dbReference type="InterPro" id="IPR004161">
    <property type="entry name" value="EFTu-like_2"/>
</dbReference>
<dbReference type="InterPro" id="IPR031157">
    <property type="entry name" value="G_TR_CS"/>
</dbReference>
<dbReference type="InterPro" id="IPR027417">
    <property type="entry name" value="P-loop_NTPase"/>
</dbReference>
<dbReference type="InterPro" id="IPR020568">
    <property type="entry name" value="Ribosomal_Su5_D2-typ_SF"/>
</dbReference>
<dbReference type="InterPro" id="IPR014721">
    <property type="entry name" value="Ribsml_uS5_D2-typ_fold_subgr"/>
</dbReference>
<dbReference type="InterPro" id="IPR005225">
    <property type="entry name" value="Small_GTP-bd"/>
</dbReference>
<dbReference type="InterPro" id="IPR000795">
    <property type="entry name" value="T_Tr_GTP-bd_dom"/>
</dbReference>
<dbReference type="InterPro" id="IPR009000">
    <property type="entry name" value="Transl_B-barrel_sf"/>
</dbReference>
<dbReference type="InterPro" id="IPR004540">
    <property type="entry name" value="Transl_elong_EFG/EF2"/>
</dbReference>
<dbReference type="InterPro" id="IPR005517">
    <property type="entry name" value="Transl_elong_EFG/EF2_IV"/>
</dbReference>
<dbReference type="NCBIfam" id="TIGR00484">
    <property type="entry name" value="EF-G"/>
    <property type="match status" value="1"/>
</dbReference>
<dbReference type="NCBIfam" id="NF009381">
    <property type="entry name" value="PRK12740.1-5"/>
    <property type="match status" value="1"/>
</dbReference>
<dbReference type="NCBIfam" id="TIGR00231">
    <property type="entry name" value="small_GTP"/>
    <property type="match status" value="1"/>
</dbReference>
<dbReference type="PANTHER" id="PTHR43261:SF1">
    <property type="entry name" value="RIBOSOME-RELEASING FACTOR 2, MITOCHONDRIAL"/>
    <property type="match status" value="1"/>
</dbReference>
<dbReference type="PANTHER" id="PTHR43261">
    <property type="entry name" value="TRANSLATION ELONGATION FACTOR G-RELATED"/>
    <property type="match status" value="1"/>
</dbReference>
<dbReference type="Pfam" id="PF00679">
    <property type="entry name" value="EFG_C"/>
    <property type="match status" value="1"/>
</dbReference>
<dbReference type="Pfam" id="PF14492">
    <property type="entry name" value="EFG_III"/>
    <property type="match status" value="1"/>
</dbReference>
<dbReference type="Pfam" id="PF03764">
    <property type="entry name" value="EFG_IV"/>
    <property type="match status" value="1"/>
</dbReference>
<dbReference type="Pfam" id="PF00009">
    <property type="entry name" value="GTP_EFTU"/>
    <property type="match status" value="1"/>
</dbReference>
<dbReference type="Pfam" id="PF03144">
    <property type="entry name" value="GTP_EFTU_D2"/>
    <property type="match status" value="1"/>
</dbReference>
<dbReference type="PRINTS" id="PR00315">
    <property type="entry name" value="ELONGATNFCT"/>
</dbReference>
<dbReference type="SMART" id="SM00838">
    <property type="entry name" value="EFG_C"/>
    <property type="match status" value="1"/>
</dbReference>
<dbReference type="SMART" id="SM00889">
    <property type="entry name" value="EFG_IV"/>
    <property type="match status" value="1"/>
</dbReference>
<dbReference type="SUPFAM" id="SSF54980">
    <property type="entry name" value="EF-G C-terminal domain-like"/>
    <property type="match status" value="2"/>
</dbReference>
<dbReference type="SUPFAM" id="SSF52540">
    <property type="entry name" value="P-loop containing nucleoside triphosphate hydrolases"/>
    <property type="match status" value="1"/>
</dbReference>
<dbReference type="SUPFAM" id="SSF54211">
    <property type="entry name" value="Ribosomal protein S5 domain 2-like"/>
    <property type="match status" value="1"/>
</dbReference>
<dbReference type="SUPFAM" id="SSF50447">
    <property type="entry name" value="Translation proteins"/>
    <property type="match status" value="1"/>
</dbReference>
<dbReference type="PROSITE" id="PS00301">
    <property type="entry name" value="G_TR_1"/>
    <property type="match status" value="1"/>
</dbReference>
<dbReference type="PROSITE" id="PS51722">
    <property type="entry name" value="G_TR_2"/>
    <property type="match status" value="1"/>
</dbReference>
<evidence type="ECO:0000255" key="1">
    <source>
        <dbReference type="HAMAP-Rule" id="MF_00054"/>
    </source>
</evidence>
<comment type="function">
    <text evidence="1">Catalyzes the GTP-dependent ribosomal translocation step during translation elongation. During this step, the ribosome changes from the pre-translocational (PRE) to the post-translocational (POST) state as the newly formed A-site-bound peptidyl-tRNA and P-site-bound deacylated tRNA move to the P and E sites, respectively. Catalyzes the coordinated movement of the two tRNA molecules, the mRNA and conformational changes in the ribosome.</text>
</comment>
<comment type="subcellular location">
    <subcellularLocation>
        <location evidence="1">Cytoplasm</location>
    </subcellularLocation>
</comment>
<comment type="similarity">
    <text evidence="1">Belongs to the TRAFAC class translation factor GTPase superfamily. Classic translation factor GTPase family. EF-G/EF-2 subfamily.</text>
</comment>
<proteinExistence type="inferred from homology"/>
<name>EFG_FRAT1</name>